<accession>Q46121</accession>
<accession>Q3MLK5</accession>
<evidence type="ECO:0000250" key="1"/>
<evidence type="ECO:0000305" key="2"/>
<organism>
    <name type="scientific">Campylobacter jejuni subsp. jejuni serotype O:2 (strain ATCC 700819 / NCTC 11168)</name>
    <dbReference type="NCBI Taxonomy" id="192222"/>
    <lineage>
        <taxon>Bacteria</taxon>
        <taxon>Pseudomonadati</taxon>
        <taxon>Campylobacterota</taxon>
        <taxon>Epsilonproteobacteria</taxon>
        <taxon>Campylobacterales</taxon>
        <taxon>Campylobacteraceae</taxon>
        <taxon>Campylobacter</taxon>
    </lineage>
</organism>
<keyword id="KW-0903">Direct protein sequencing</keyword>
<keyword id="KW-0226">DNA condensation</keyword>
<keyword id="KW-0238">DNA-binding</keyword>
<keyword id="KW-1185">Reference proteome</keyword>
<proteinExistence type="evidence at protein level"/>
<protein>
    <recommendedName>
        <fullName>DNA-binding protein HU</fullName>
    </recommendedName>
    <alternativeName>
        <fullName>HCj</fullName>
    </alternativeName>
</protein>
<dbReference type="EMBL" id="L25627">
    <property type="protein sequence ID" value="AAA60954.1"/>
    <property type="molecule type" value="Genomic_DNA"/>
</dbReference>
<dbReference type="EMBL" id="AY751940">
    <property type="protein sequence ID" value="AAW83330.1"/>
    <property type="molecule type" value="Genomic_DNA"/>
</dbReference>
<dbReference type="EMBL" id="AY751941">
    <property type="protein sequence ID" value="AAW83331.1"/>
    <property type="molecule type" value="Genomic_DNA"/>
</dbReference>
<dbReference type="EMBL" id="AY751943">
    <property type="protein sequence ID" value="AAW83333.1"/>
    <property type="molecule type" value="Genomic_DNA"/>
</dbReference>
<dbReference type="EMBL" id="AY751945">
    <property type="protein sequence ID" value="AAW83335.1"/>
    <property type="molecule type" value="Genomic_DNA"/>
</dbReference>
<dbReference type="EMBL" id="AY751946">
    <property type="protein sequence ID" value="AAW83336.1"/>
    <property type="molecule type" value="Genomic_DNA"/>
</dbReference>
<dbReference type="EMBL" id="AY751954">
    <property type="protein sequence ID" value="AAW83344.1"/>
    <property type="molecule type" value="Genomic_DNA"/>
</dbReference>
<dbReference type="EMBL" id="AY751955">
    <property type="protein sequence ID" value="AAW83345.1"/>
    <property type="molecule type" value="Genomic_DNA"/>
</dbReference>
<dbReference type="EMBL" id="AY751959">
    <property type="protein sequence ID" value="AAW83349.1"/>
    <property type="molecule type" value="Genomic_DNA"/>
</dbReference>
<dbReference type="EMBL" id="AY751960">
    <property type="protein sequence ID" value="AAW83350.1"/>
    <property type="molecule type" value="Genomic_DNA"/>
</dbReference>
<dbReference type="EMBL" id="AY751980">
    <property type="protein sequence ID" value="AAW83370.1"/>
    <property type="molecule type" value="Genomic_DNA"/>
</dbReference>
<dbReference type="EMBL" id="AY751982">
    <property type="protein sequence ID" value="AAW83372.1"/>
    <property type="molecule type" value="Genomic_DNA"/>
</dbReference>
<dbReference type="EMBL" id="AY751983">
    <property type="protein sequence ID" value="AAW83373.1"/>
    <property type="molecule type" value="Genomic_DNA"/>
</dbReference>
<dbReference type="EMBL" id="AY751984">
    <property type="protein sequence ID" value="AAW83374.1"/>
    <property type="molecule type" value="Genomic_DNA"/>
</dbReference>
<dbReference type="EMBL" id="AY751992">
    <property type="protein sequence ID" value="AAW83382.1"/>
    <property type="molecule type" value="Genomic_DNA"/>
</dbReference>
<dbReference type="EMBL" id="AY751994">
    <property type="protein sequence ID" value="AAW83384.1"/>
    <property type="molecule type" value="Genomic_DNA"/>
</dbReference>
<dbReference type="EMBL" id="AY751995">
    <property type="protein sequence ID" value="AAW83385.1"/>
    <property type="molecule type" value="Genomic_DNA"/>
</dbReference>
<dbReference type="EMBL" id="AY751996">
    <property type="protein sequence ID" value="AAW83386.1"/>
    <property type="molecule type" value="Genomic_DNA"/>
</dbReference>
<dbReference type="EMBL" id="AY751997">
    <property type="protein sequence ID" value="AAW83387.1"/>
    <property type="molecule type" value="Genomic_DNA"/>
</dbReference>
<dbReference type="EMBL" id="AY751998">
    <property type="protein sequence ID" value="AAW83388.1"/>
    <property type="molecule type" value="Genomic_DNA"/>
</dbReference>
<dbReference type="EMBL" id="AY751999">
    <property type="protein sequence ID" value="AAW83389.1"/>
    <property type="molecule type" value="Genomic_DNA"/>
</dbReference>
<dbReference type="EMBL" id="AY752000">
    <property type="protein sequence ID" value="AAW83390.1"/>
    <property type="molecule type" value="Genomic_DNA"/>
</dbReference>
<dbReference type="EMBL" id="AY752001">
    <property type="protein sequence ID" value="AAW83391.1"/>
    <property type="molecule type" value="Genomic_DNA"/>
</dbReference>
<dbReference type="EMBL" id="AY752002">
    <property type="protein sequence ID" value="AAW83392.1"/>
    <property type="molecule type" value="Genomic_DNA"/>
</dbReference>
<dbReference type="EMBL" id="AY752003">
    <property type="protein sequence ID" value="AAW83393.1"/>
    <property type="molecule type" value="Genomic_DNA"/>
</dbReference>
<dbReference type="EMBL" id="AY752004">
    <property type="protein sequence ID" value="AAW83394.1"/>
    <property type="molecule type" value="Genomic_DNA"/>
</dbReference>
<dbReference type="EMBL" id="AY752005">
    <property type="protein sequence ID" value="AAW83395.1"/>
    <property type="molecule type" value="Genomic_DNA"/>
</dbReference>
<dbReference type="EMBL" id="AY752017">
    <property type="protein sequence ID" value="AAW83407.1"/>
    <property type="molecule type" value="Genomic_DNA"/>
</dbReference>
<dbReference type="EMBL" id="AL111168">
    <property type="protein sequence ID" value="CAL35033.1"/>
    <property type="molecule type" value="Genomic_DNA"/>
</dbReference>
<dbReference type="PIR" id="I40616">
    <property type="entry name" value="I40616"/>
</dbReference>
<dbReference type="RefSeq" id="WP_002859562.1">
    <property type="nucleotide sequence ID" value="NZ_SZUC01000001.1"/>
</dbReference>
<dbReference type="RefSeq" id="YP_002344311.1">
    <property type="nucleotide sequence ID" value="NC_002163.1"/>
</dbReference>
<dbReference type="SMR" id="Q46121"/>
<dbReference type="IntAct" id="Q46121">
    <property type="interactions" value="66"/>
</dbReference>
<dbReference type="STRING" id="192222.Cj0913c"/>
<dbReference type="PaxDb" id="192222-Cj0913c"/>
<dbReference type="EnsemblBacteria" id="CAL35033">
    <property type="protein sequence ID" value="CAL35033"/>
    <property type="gene ID" value="Cj0913c"/>
</dbReference>
<dbReference type="GeneID" id="905212"/>
<dbReference type="KEGG" id="cje:Cj0913c"/>
<dbReference type="PATRIC" id="fig|192222.6.peg.897"/>
<dbReference type="eggNOG" id="COG0776">
    <property type="taxonomic scope" value="Bacteria"/>
</dbReference>
<dbReference type="HOGENOM" id="CLU_105066_3_2_7"/>
<dbReference type="OrthoDB" id="9799835at2"/>
<dbReference type="Proteomes" id="UP000000799">
    <property type="component" value="Chromosome"/>
</dbReference>
<dbReference type="GO" id="GO:0005829">
    <property type="term" value="C:cytosol"/>
    <property type="evidence" value="ECO:0007669"/>
    <property type="project" value="TreeGrafter"/>
</dbReference>
<dbReference type="GO" id="GO:0003677">
    <property type="term" value="F:DNA binding"/>
    <property type="evidence" value="ECO:0007669"/>
    <property type="project" value="UniProtKB-KW"/>
</dbReference>
<dbReference type="GO" id="GO:0030527">
    <property type="term" value="F:structural constituent of chromatin"/>
    <property type="evidence" value="ECO:0007669"/>
    <property type="project" value="InterPro"/>
</dbReference>
<dbReference type="GO" id="GO:0030261">
    <property type="term" value="P:chromosome condensation"/>
    <property type="evidence" value="ECO:0007669"/>
    <property type="project" value="UniProtKB-KW"/>
</dbReference>
<dbReference type="CDD" id="cd13831">
    <property type="entry name" value="HU"/>
    <property type="match status" value="1"/>
</dbReference>
<dbReference type="Gene3D" id="4.10.520.10">
    <property type="entry name" value="IHF-like DNA-binding proteins"/>
    <property type="match status" value="1"/>
</dbReference>
<dbReference type="InterPro" id="IPR000119">
    <property type="entry name" value="Hist_DNA-bd"/>
</dbReference>
<dbReference type="InterPro" id="IPR010992">
    <property type="entry name" value="IHF-like_DNA-bd_dom_sf"/>
</dbReference>
<dbReference type="PANTHER" id="PTHR33175">
    <property type="entry name" value="DNA-BINDING PROTEIN HU"/>
    <property type="match status" value="1"/>
</dbReference>
<dbReference type="PANTHER" id="PTHR33175:SF3">
    <property type="entry name" value="DNA-BINDING PROTEIN HU-BETA"/>
    <property type="match status" value="1"/>
</dbReference>
<dbReference type="Pfam" id="PF00216">
    <property type="entry name" value="Bac_DNA_binding"/>
    <property type="match status" value="1"/>
</dbReference>
<dbReference type="PRINTS" id="PR01727">
    <property type="entry name" value="DNABINDINGHU"/>
</dbReference>
<dbReference type="SMART" id="SM00411">
    <property type="entry name" value="BHL"/>
    <property type="match status" value="1"/>
</dbReference>
<dbReference type="SUPFAM" id="SSF47729">
    <property type="entry name" value="IHF-like DNA-binding proteins"/>
    <property type="match status" value="1"/>
</dbReference>
<gene>
    <name type="primary">hup</name>
    <name type="synonym">hupB</name>
    <name type="ordered locus">Cj0913c</name>
</gene>
<reference key="1">
    <citation type="journal article" date="1994" name="Gene">
        <title>Cloning and expression of the hup gene encoding a histone-like protein of Campylobacter jejuni.</title>
        <authorList>
            <person name="Konkel M.E."/>
            <person name="Marconi R.T."/>
            <person name="Mead D.J."/>
            <person name="Cieplak W. Jr."/>
        </authorList>
    </citation>
    <scope>NUCLEOTIDE SEQUENCE [GENOMIC DNA]</scope>
    <scope>PROTEIN SEQUENCE OF 1-13</scope>
    <source>
        <strain>F38011</strain>
    </source>
</reference>
<reference key="2">
    <citation type="submission" date="2004-09" db="EMBL/GenBank/DDBJ databases">
        <title>Genomic and proteomic identification of a DNA-binding protein biomarker used in the discrimination of Campylobacter species and strains by MALDI-TOF-MS.</title>
        <authorList>
            <person name="Fagerquist C.K."/>
            <person name="Miller W.G."/>
            <person name="Harden L.A."/>
            <person name="Bates A.H."/>
            <person name="Vensel W.H."/>
            <person name="Wang G."/>
            <person name="Mandrell R.E."/>
        </authorList>
    </citation>
    <scope>NUCLEOTIDE SEQUENCE [GENOMIC DNA]</scope>
    <source>
        <strain>RM1046</strain>
        <strain>RM1049</strain>
        <strain>RM1052</strain>
        <strain>RM1167</strain>
        <strain>RM1170</strain>
        <strain>RM1849</strain>
        <strain>RM1852</strain>
        <strain>RM1860</strain>
        <strain>RM1861</strain>
        <strain>RM2227</strain>
        <strain>RM2229</strain>
        <strain>RM2232</strain>
        <strain>RM2239</strain>
        <strain>RM3193</strain>
        <strain>RM3197</strain>
        <strain>RM3198</strain>
        <strain>RM3200</strain>
        <strain>RM3201</strain>
        <strain>RM3203</strain>
        <strain>RM3204</strain>
        <strain>RM3205</strain>
        <strain>RM3206</strain>
        <strain>RM3207</strain>
        <strain>RM3208</strain>
        <strain>RM3209</strain>
        <strain>RM3210</strain>
        <strain>RM3782</strain>
    </source>
</reference>
<reference key="3">
    <citation type="journal article" date="2000" name="Nature">
        <title>The genome sequence of the food-borne pathogen Campylobacter jejuni reveals hypervariable sequences.</title>
        <authorList>
            <person name="Parkhill J."/>
            <person name="Wren B.W."/>
            <person name="Mungall K.L."/>
            <person name="Ketley J.M."/>
            <person name="Churcher C.M."/>
            <person name="Basham D."/>
            <person name="Chillingworth T."/>
            <person name="Davies R.M."/>
            <person name="Feltwell T."/>
            <person name="Holroyd S."/>
            <person name="Jagels K."/>
            <person name="Karlyshev A.V."/>
            <person name="Moule S."/>
            <person name="Pallen M.J."/>
            <person name="Penn C.W."/>
            <person name="Quail M.A."/>
            <person name="Rajandream M.A."/>
            <person name="Rutherford K.M."/>
            <person name="van Vliet A.H.M."/>
            <person name="Whitehead S."/>
            <person name="Barrell B.G."/>
        </authorList>
    </citation>
    <scope>NUCLEOTIDE SEQUENCE [LARGE SCALE GENOMIC DNA]</scope>
    <source>
        <strain>ATCC 700819 / NCTC 11168</strain>
    </source>
</reference>
<comment type="function">
    <text>Histone-like DNA-binding protein which is capable of wrapping DNA to stabilize it, and thus to prevent its denaturation under extreme environmental conditions.</text>
</comment>
<comment type="subunit">
    <text evidence="1">Homodimer.</text>
</comment>
<comment type="similarity">
    <text evidence="2">Belongs to the bacterial histone-like protein family.</text>
</comment>
<sequence length="98" mass="10274">MTKADFISLVAQTAGLTKKDATTATDAVISTITDVLAKGDSISFIGFGTFSTQERAAREARVPSTGKTIKVPATRVAKFKVGKNLKEAVAKASGKKKK</sequence>
<name>DBH_CAMJE</name>
<feature type="chain" id="PRO_0000104928" description="DNA-binding protein HU">
    <location>
        <begin position="1"/>
        <end position="98"/>
    </location>
</feature>